<reference key="1">
    <citation type="journal article" date="2006" name="PLoS Biol.">
        <title>The genome of deep-sea vent chemolithoautotroph Thiomicrospira crunogena XCL-2.</title>
        <authorList>
            <person name="Scott K.M."/>
            <person name="Sievert S.M."/>
            <person name="Abril F.N."/>
            <person name="Ball L.A."/>
            <person name="Barrett C.J."/>
            <person name="Blake R.A."/>
            <person name="Boller A.J."/>
            <person name="Chain P.S.G."/>
            <person name="Clark J.A."/>
            <person name="Davis C.R."/>
            <person name="Detter C."/>
            <person name="Do K.F."/>
            <person name="Dobrinski K.P."/>
            <person name="Faza B.I."/>
            <person name="Fitzpatrick K.A."/>
            <person name="Freyermuth S.K."/>
            <person name="Harmer T.L."/>
            <person name="Hauser L.J."/>
            <person name="Huegler M."/>
            <person name="Kerfeld C.A."/>
            <person name="Klotz M.G."/>
            <person name="Kong W.W."/>
            <person name="Land M."/>
            <person name="Lapidus A."/>
            <person name="Larimer F.W."/>
            <person name="Longo D.L."/>
            <person name="Lucas S."/>
            <person name="Malfatti S.A."/>
            <person name="Massey S.E."/>
            <person name="Martin D.D."/>
            <person name="McCuddin Z."/>
            <person name="Meyer F."/>
            <person name="Moore J.L."/>
            <person name="Ocampo L.H. Jr."/>
            <person name="Paul J.H."/>
            <person name="Paulsen I.T."/>
            <person name="Reep D.K."/>
            <person name="Ren Q."/>
            <person name="Ross R.L."/>
            <person name="Sato P.Y."/>
            <person name="Thomas P."/>
            <person name="Tinkham L.E."/>
            <person name="Zeruth G.T."/>
        </authorList>
    </citation>
    <scope>NUCLEOTIDE SEQUENCE [LARGE SCALE GENOMIC DNA]</scope>
    <source>
        <strain>DSM 25203 / XCL-2</strain>
    </source>
</reference>
<comment type="function">
    <text evidence="1">Allows the formation of correctly charged Asn-tRNA(Asn) or Gln-tRNA(Gln) through the transamidation of misacylated Asp-tRNA(Asn) or Glu-tRNA(Gln) in organisms which lack either or both of asparaginyl-tRNA or glutaminyl-tRNA synthetases. The reaction takes place in the presence of glutamine and ATP through an activated phospho-Asp-tRNA(Asn) or phospho-Glu-tRNA(Gln).</text>
</comment>
<comment type="catalytic activity">
    <reaction evidence="1">
        <text>L-glutamyl-tRNA(Gln) + L-glutamine + ATP + H2O = L-glutaminyl-tRNA(Gln) + L-glutamate + ADP + phosphate + H(+)</text>
        <dbReference type="Rhea" id="RHEA:17521"/>
        <dbReference type="Rhea" id="RHEA-COMP:9681"/>
        <dbReference type="Rhea" id="RHEA-COMP:9684"/>
        <dbReference type="ChEBI" id="CHEBI:15377"/>
        <dbReference type="ChEBI" id="CHEBI:15378"/>
        <dbReference type="ChEBI" id="CHEBI:29985"/>
        <dbReference type="ChEBI" id="CHEBI:30616"/>
        <dbReference type="ChEBI" id="CHEBI:43474"/>
        <dbReference type="ChEBI" id="CHEBI:58359"/>
        <dbReference type="ChEBI" id="CHEBI:78520"/>
        <dbReference type="ChEBI" id="CHEBI:78521"/>
        <dbReference type="ChEBI" id="CHEBI:456216"/>
    </reaction>
</comment>
<comment type="catalytic activity">
    <reaction evidence="1">
        <text>L-aspartyl-tRNA(Asn) + L-glutamine + ATP + H2O = L-asparaginyl-tRNA(Asn) + L-glutamate + ADP + phosphate + 2 H(+)</text>
        <dbReference type="Rhea" id="RHEA:14513"/>
        <dbReference type="Rhea" id="RHEA-COMP:9674"/>
        <dbReference type="Rhea" id="RHEA-COMP:9677"/>
        <dbReference type="ChEBI" id="CHEBI:15377"/>
        <dbReference type="ChEBI" id="CHEBI:15378"/>
        <dbReference type="ChEBI" id="CHEBI:29985"/>
        <dbReference type="ChEBI" id="CHEBI:30616"/>
        <dbReference type="ChEBI" id="CHEBI:43474"/>
        <dbReference type="ChEBI" id="CHEBI:58359"/>
        <dbReference type="ChEBI" id="CHEBI:78515"/>
        <dbReference type="ChEBI" id="CHEBI:78516"/>
        <dbReference type="ChEBI" id="CHEBI:456216"/>
    </reaction>
</comment>
<comment type="subunit">
    <text evidence="1">Heterotrimer of A, B and C subunits.</text>
</comment>
<comment type="similarity">
    <text evidence="1">Belongs to the GatC family.</text>
</comment>
<dbReference type="EC" id="6.3.5.-" evidence="1"/>
<dbReference type="EMBL" id="CP000109">
    <property type="protein sequence ID" value="ABB42221.1"/>
    <property type="molecule type" value="Genomic_DNA"/>
</dbReference>
<dbReference type="SMR" id="Q31F52"/>
<dbReference type="STRING" id="317025.Tcr_1629"/>
<dbReference type="KEGG" id="tcx:Tcr_1629"/>
<dbReference type="eggNOG" id="COG0721">
    <property type="taxonomic scope" value="Bacteria"/>
</dbReference>
<dbReference type="HOGENOM" id="CLU_105899_2_2_6"/>
<dbReference type="OrthoDB" id="9794326at2"/>
<dbReference type="GO" id="GO:0050566">
    <property type="term" value="F:asparaginyl-tRNA synthase (glutamine-hydrolyzing) activity"/>
    <property type="evidence" value="ECO:0007669"/>
    <property type="project" value="RHEA"/>
</dbReference>
<dbReference type="GO" id="GO:0005524">
    <property type="term" value="F:ATP binding"/>
    <property type="evidence" value="ECO:0007669"/>
    <property type="project" value="UniProtKB-KW"/>
</dbReference>
<dbReference type="GO" id="GO:0050567">
    <property type="term" value="F:glutaminyl-tRNA synthase (glutamine-hydrolyzing) activity"/>
    <property type="evidence" value="ECO:0007669"/>
    <property type="project" value="UniProtKB-UniRule"/>
</dbReference>
<dbReference type="GO" id="GO:0070681">
    <property type="term" value="P:glutaminyl-tRNAGln biosynthesis via transamidation"/>
    <property type="evidence" value="ECO:0007669"/>
    <property type="project" value="TreeGrafter"/>
</dbReference>
<dbReference type="GO" id="GO:0006450">
    <property type="term" value="P:regulation of translational fidelity"/>
    <property type="evidence" value="ECO:0007669"/>
    <property type="project" value="InterPro"/>
</dbReference>
<dbReference type="GO" id="GO:0006412">
    <property type="term" value="P:translation"/>
    <property type="evidence" value="ECO:0007669"/>
    <property type="project" value="UniProtKB-UniRule"/>
</dbReference>
<dbReference type="Gene3D" id="1.10.20.60">
    <property type="entry name" value="Glu-tRNAGln amidotransferase C subunit, N-terminal domain"/>
    <property type="match status" value="1"/>
</dbReference>
<dbReference type="HAMAP" id="MF_00122">
    <property type="entry name" value="GatC"/>
    <property type="match status" value="1"/>
</dbReference>
<dbReference type="InterPro" id="IPR036113">
    <property type="entry name" value="Asp/Glu-ADT_sf_sub_c"/>
</dbReference>
<dbReference type="InterPro" id="IPR003837">
    <property type="entry name" value="GatC"/>
</dbReference>
<dbReference type="NCBIfam" id="TIGR00135">
    <property type="entry name" value="gatC"/>
    <property type="match status" value="1"/>
</dbReference>
<dbReference type="PANTHER" id="PTHR15004">
    <property type="entry name" value="GLUTAMYL-TRNA(GLN) AMIDOTRANSFERASE SUBUNIT C, MITOCHONDRIAL"/>
    <property type="match status" value="1"/>
</dbReference>
<dbReference type="PANTHER" id="PTHR15004:SF0">
    <property type="entry name" value="GLUTAMYL-TRNA(GLN) AMIDOTRANSFERASE SUBUNIT C, MITOCHONDRIAL"/>
    <property type="match status" value="1"/>
</dbReference>
<dbReference type="Pfam" id="PF02686">
    <property type="entry name" value="GatC"/>
    <property type="match status" value="1"/>
</dbReference>
<dbReference type="SUPFAM" id="SSF141000">
    <property type="entry name" value="Glu-tRNAGln amidotransferase C subunit"/>
    <property type="match status" value="1"/>
</dbReference>
<name>GATC_HYDCU</name>
<sequence length="95" mass="10695">MSLEKTEVDTISRLAAISVDASEVDQLTAKISNVLDLFQRMEAVDTTNVEPMSHPLDQVQRLREDVVTETDHHEEYQKLAPAAEKGMYLVPQVID</sequence>
<proteinExistence type="inferred from homology"/>
<gene>
    <name evidence="1" type="primary">gatC</name>
    <name type="ordered locus">Tcr_1629</name>
</gene>
<feature type="chain" id="PRO_1000016238" description="Aspartyl/glutamyl-tRNA(Asn/Gln) amidotransferase subunit C">
    <location>
        <begin position="1"/>
        <end position="95"/>
    </location>
</feature>
<protein>
    <recommendedName>
        <fullName evidence="1">Aspartyl/glutamyl-tRNA(Asn/Gln) amidotransferase subunit C</fullName>
        <shortName evidence="1">Asp/Glu-ADT subunit C</shortName>
        <ecNumber evidence="1">6.3.5.-</ecNumber>
    </recommendedName>
</protein>
<keyword id="KW-0067">ATP-binding</keyword>
<keyword id="KW-0436">Ligase</keyword>
<keyword id="KW-0547">Nucleotide-binding</keyword>
<keyword id="KW-0648">Protein biosynthesis</keyword>
<organism>
    <name type="scientific">Hydrogenovibrio crunogenus (strain DSM 25203 / XCL-2)</name>
    <name type="common">Thiomicrospira crunogena</name>
    <dbReference type="NCBI Taxonomy" id="317025"/>
    <lineage>
        <taxon>Bacteria</taxon>
        <taxon>Pseudomonadati</taxon>
        <taxon>Pseudomonadota</taxon>
        <taxon>Gammaproteobacteria</taxon>
        <taxon>Thiotrichales</taxon>
        <taxon>Piscirickettsiaceae</taxon>
        <taxon>Hydrogenovibrio</taxon>
    </lineage>
</organism>
<accession>Q31F52</accession>
<evidence type="ECO:0000255" key="1">
    <source>
        <dbReference type="HAMAP-Rule" id="MF_00122"/>
    </source>
</evidence>